<protein>
    <recommendedName>
        <fullName evidence="1">ATP phosphoribosyltransferase regulatory subunit</fullName>
    </recommendedName>
</protein>
<comment type="function">
    <text evidence="1">Required for the first step of histidine biosynthesis. May allow the feedback regulation of ATP phosphoribosyltransferase activity by histidine.</text>
</comment>
<comment type="pathway">
    <text evidence="1">Amino-acid biosynthesis; L-histidine biosynthesis; L-histidine from 5-phospho-alpha-D-ribose 1-diphosphate: step 1/9.</text>
</comment>
<comment type="subunit">
    <text evidence="1">Heteromultimer composed of HisG and HisZ subunits.</text>
</comment>
<comment type="subcellular location">
    <subcellularLocation>
        <location evidence="1">Cytoplasm</location>
    </subcellularLocation>
</comment>
<comment type="miscellaneous">
    <text>This function is generally fulfilled by the C-terminal part of HisG, which is missing in some bacteria such as this one.</text>
</comment>
<comment type="similarity">
    <text evidence="1">Belongs to the class-II aminoacyl-tRNA synthetase family. HisZ subfamily.</text>
</comment>
<proteinExistence type="inferred from homology"/>
<evidence type="ECO:0000255" key="1">
    <source>
        <dbReference type="HAMAP-Rule" id="MF_00125"/>
    </source>
</evidence>
<sequence length="383" mass="41810">MSNHWLLPENIADVLPSEARKIEELRRRMLDLFRTYGYELVMPPMLEYLESLLTGTGHDLDLRTLKLVDQLSGRTMGLRADITPQVARIDAHLLNRPGVTRLCYAGNVLHARPAGFHATREPIQVGAEIYGHAGLEADVEIQELMLAALQAAGLSDIRIDLCHAGILEALLDGLPSIRRIEDALFAALETKDVSALREITQGMPQTERDALLALPTLYGGVEVIDRARATLPASPAIGRALDELVALATQVRGASINIDLSDLRGYHYHSGVMFAAYVAGLPNYVARGGRYDKVGEAFGRARPATGFSLDLREVAALSPIEVRAQAIFAPWDADPALRAAIVALRAAGEIVIQSLPGHTKELDEFNCDRQLVRQEAGWVVAPR</sequence>
<feature type="chain" id="PRO_0000242853" description="ATP phosphoribosyltransferase regulatory subunit">
    <location>
        <begin position="1"/>
        <end position="383"/>
    </location>
</feature>
<name>HISZ_CUPPJ</name>
<organism>
    <name type="scientific">Cupriavidus pinatubonensis (strain JMP 134 / LMG 1197)</name>
    <name type="common">Cupriavidus necator (strain JMP 134)</name>
    <dbReference type="NCBI Taxonomy" id="264198"/>
    <lineage>
        <taxon>Bacteria</taxon>
        <taxon>Pseudomonadati</taxon>
        <taxon>Pseudomonadota</taxon>
        <taxon>Betaproteobacteria</taxon>
        <taxon>Burkholderiales</taxon>
        <taxon>Burkholderiaceae</taxon>
        <taxon>Cupriavidus</taxon>
    </lineage>
</organism>
<reference key="1">
    <citation type="journal article" date="2010" name="PLoS ONE">
        <title>The complete multipartite genome sequence of Cupriavidus necator JMP134, a versatile pollutant degrader.</title>
        <authorList>
            <person name="Lykidis A."/>
            <person name="Perez-Pantoja D."/>
            <person name="Ledger T."/>
            <person name="Mavromatis K."/>
            <person name="Anderson I.J."/>
            <person name="Ivanova N.N."/>
            <person name="Hooper S.D."/>
            <person name="Lapidus A."/>
            <person name="Lucas S."/>
            <person name="Gonzalez B."/>
            <person name="Kyrpides N.C."/>
        </authorList>
    </citation>
    <scope>NUCLEOTIDE SEQUENCE [LARGE SCALE GENOMIC DNA]</scope>
    <source>
        <strain>JMP134 / LMG 1197</strain>
    </source>
</reference>
<accession>Q46ZJ2</accession>
<keyword id="KW-0028">Amino-acid biosynthesis</keyword>
<keyword id="KW-0963">Cytoplasm</keyword>
<keyword id="KW-0368">Histidine biosynthesis</keyword>
<gene>
    <name evidence="1" type="primary">hisZ</name>
    <name type="ordered locus">Reut_A2077</name>
</gene>
<dbReference type="EMBL" id="CP000090">
    <property type="protein sequence ID" value="AAZ61441.1"/>
    <property type="molecule type" value="Genomic_DNA"/>
</dbReference>
<dbReference type="SMR" id="Q46ZJ2"/>
<dbReference type="STRING" id="264198.Reut_A2077"/>
<dbReference type="KEGG" id="reu:Reut_A2077"/>
<dbReference type="eggNOG" id="COG3705">
    <property type="taxonomic scope" value="Bacteria"/>
</dbReference>
<dbReference type="HOGENOM" id="CLU_025113_0_1_4"/>
<dbReference type="OrthoDB" id="9769617at2"/>
<dbReference type="UniPathway" id="UPA00031">
    <property type="reaction ID" value="UER00006"/>
</dbReference>
<dbReference type="GO" id="GO:0005737">
    <property type="term" value="C:cytoplasm"/>
    <property type="evidence" value="ECO:0007669"/>
    <property type="project" value="UniProtKB-SubCell"/>
</dbReference>
<dbReference type="GO" id="GO:0004821">
    <property type="term" value="F:histidine-tRNA ligase activity"/>
    <property type="evidence" value="ECO:0007669"/>
    <property type="project" value="TreeGrafter"/>
</dbReference>
<dbReference type="GO" id="GO:0006427">
    <property type="term" value="P:histidyl-tRNA aminoacylation"/>
    <property type="evidence" value="ECO:0007669"/>
    <property type="project" value="TreeGrafter"/>
</dbReference>
<dbReference type="GO" id="GO:0000105">
    <property type="term" value="P:L-histidine biosynthetic process"/>
    <property type="evidence" value="ECO:0007669"/>
    <property type="project" value="UniProtKB-UniRule"/>
</dbReference>
<dbReference type="CDD" id="cd00773">
    <property type="entry name" value="HisRS-like_core"/>
    <property type="match status" value="1"/>
</dbReference>
<dbReference type="Gene3D" id="3.30.930.10">
    <property type="entry name" value="Bira Bifunctional Protein, Domain 2"/>
    <property type="match status" value="1"/>
</dbReference>
<dbReference type="HAMAP" id="MF_00125">
    <property type="entry name" value="HisZ"/>
    <property type="match status" value="1"/>
</dbReference>
<dbReference type="InterPro" id="IPR045864">
    <property type="entry name" value="aa-tRNA-synth_II/BPL/LPL"/>
</dbReference>
<dbReference type="InterPro" id="IPR041715">
    <property type="entry name" value="HisRS-like_core"/>
</dbReference>
<dbReference type="InterPro" id="IPR004516">
    <property type="entry name" value="HisRS/HisZ"/>
</dbReference>
<dbReference type="InterPro" id="IPR004517">
    <property type="entry name" value="HisZ"/>
</dbReference>
<dbReference type="NCBIfam" id="TIGR00443">
    <property type="entry name" value="hisZ_biosyn_reg"/>
    <property type="match status" value="1"/>
</dbReference>
<dbReference type="NCBIfam" id="NF008935">
    <property type="entry name" value="PRK12292.1-1"/>
    <property type="match status" value="1"/>
</dbReference>
<dbReference type="NCBIfam" id="NF009086">
    <property type="entry name" value="PRK12421.1"/>
    <property type="match status" value="1"/>
</dbReference>
<dbReference type="PANTHER" id="PTHR43707:SF1">
    <property type="entry name" value="HISTIDINE--TRNA LIGASE, MITOCHONDRIAL-RELATED"/>
    <property type="match status" value="1"/>
</dbReference>
<dbReference type="PANTHER" id="PTHR43707">
    <property type="entry name" value="HISTIDYL-TRNA SYNTHETASE"/>
    <property type="match status" value="1"/>
</dbReference>
<dbReference type="Pfam" id="PF13393">
    <property type="entry name" value="tRNA-synt_His"/>
    <property type="match status" value="1"/>
</dbReference>
<dbReference type="PIRSF" id="PIRSF001549">
    <property type="entry name" value="His-tRNA_synth"/>
    <property type="match status" value="1"/>
</dbReference>
<dbReference type="SUPFAM" id="SSF55681">
    <property type="entry name" value="Class II aaRS and biotin synthetases"/>
    <property type="match status" value="1"/>
</dbReference>